<dbReference type="EMBL" id="AE016823">
    <property type="protein sequence ID" value="AAS70349.1"/>
    <property type="molecule type" value="Genomic_DNA"/>
</dbReference>
<dbReference type="RefSeq" id="WP_000113840.1">
    <property type="nucleotide sequence ID" value="NC_005823.1"/>
</dbReference>
<dbReference type="SMR" id="Q72RI5"/>
<dbReference type="GeneID" id="61141659"/>
<dbReference type="KEGG" id="lic:LIC_11760"/>
<dbReference type="HOGENOM" id="CLU_064548_3_0_12"/>
<dbReference type="Proteomes" id="UP000007037">
    <property type="component" value="Chromosome I"/>
</dbReference>
<dbReference type="GO" id="GO:1990904">
    <property type="term" value="C:ribonucleoprotein complex"/>
    <property type="evidence" value="ECO:0007669"/>
    <property type="project" value="UniProtKB-KW"/>
</dbReference>
<dbReference type="GO" id="GO:0005840">
    <property type="term" value="C:ribosome"/>
    <property type="evidence" value="ECO:0007669"/>
    <property type="project" value="UniProtKB-KW"/>
</dbReference>
<dbReference type="GO" id="GO:0003735">
    <property type="term" value="F:structural constituent of ribosome"/>
    <property type="evidence" value="ECO:0007669"/>
    <property type="project" value="InterPro"/>
</dbReference>
<dbReference type="GO" id="GO:0006412">
    <property type="term" value="P:translation"/>
    <property type="evidence" value="ECO:0007669"/>
    <property type="project" value="UniProtKB-UniRule"/>
</dbReference>
<dbReference type="FunFam" id="2.30.170.40:FF:000007">
    <property type="entry name" value="50S ribosomal protein L28"/>
    <property type="match status" value="1"/>
</dbReference>
<dbReference type="Gene3D" id="2.30.170.40">
    <property type="entry name" value="Ribosomal protein L28/L24"/>
    <property type="match status" value="1"/>
</dbReference>
<dbReference type="HAMAP" id="MF_00373">
    <property type="entry name" value="Ribosomal_bL28"/>
    <property type="match status" value="1"/>
</dbReference>
<dbReference type="InterPro" id="IPR026569">
    <property type="entry name" value="Ribosomal_bL28"/>
</dbReference>
<dbReference type="InterPro" id="IPR034704">
    <property type="entry name" value="Ribosomal_bL28/bL31-like_sf"/>
</dbReference>
<dbReference type="InterPro" id="IPR001383">
    <property type="entry name" value="Ribosomal_bL28_bact-type"/>
</dbReference>
<dbReference type="InterPro" id="IPR037147">
    <property type="entry name" value="Ribosomal_bL28_sf"/>
</dbReference>
<dbReference type="NCBIfam" id="TIGR00009">
    <property type="entry name" value="L28"/>
    <property type="match status" value="1"/>
</dbReference>
<dbReference type="PANTHER" id="PTHR13528">
    <property type="entry name" value="39S RIBOSOMAL PROTEIN L28, MITOCHONDRIAL"/>
    <property type="match status" value="1"/>
</dbReference>
<dbReference type="PANTHER" id="PTHR13528:SF2">
    <property type="entry name" value="LARGE RIBOSOMAL SUBUNIT PROTEIN BL28M"/>
    <property type="match status" value="1"/>
</dbReference>
<dbReference type="Pfam" id="PF00830">
    <property type="entry name" value="Ribosomal_L28"/>
    <property type="match status" value="1"/>
</dbReference>
<dbReference type="SUPFAM" id="SSF143800">
    <property type="entry name" value="L28p-like"/>
    <property type="match status" value="1"/>
</dbReference>
<evidence type="ECO:0000255" key="1">
    <source>
        <dbReference type="HAMAP-Rule" id="MF_00373"/>
    </source>
</evidence>
<evidence type="ECO:0000256" key="2">
    <source>
        <dbReference type="SAM" id="MobiDB-lite"/>
    </source>
</evidence>
<evidence type="ECO:0000305" key="3"/>
<keyword id="KW-0687">Ribonucleoprotein</keyword>
<keyword id="KW-0689">Ribosomal protein</keyword>
<accession>Q72RI5</accession>
<proteinExistence type="inferred from homology"/>
<sequence length="94" mass="10552">MARRCEVTGRGTVSGNNVSHSHIKTRRTWKVNLIKKRIFLEDENRWVTIRLSTRALRTLRKKGIKAAIKDNGGSLGVLAPKKYAGITKQAPKKA</sequence>
<organism>
    <name type="scientific">Leptospira interrogans serogroup Icterohaemorrhagiae serovar copenhageni (strain Fiocruz L1-130)</name>
    <dbReference type="NCBI Taxonomy" id="267671"/>
    <lineage>
        <taxon>Bacteria</taxon>
        <taxon>Pseudomonadati</taxon>
        <taxon>Spirochaetota</taxon>
        <taxon>Spirochaetia</taxon>
        <taxon>Leptospirales</taxon>
        <taxon>Leptospiraceae</taxon>
        <taxon>Leptospira</taxon>
    </lineage>
</organism>
<comment type="similarity">
    <text evidence="1">Belongs to the bacterial ribosomal protein bL28 family.</text>
</comment>
<feature type="chain" id="PRO_0000178493" description="Large ribosomal subunit protein bL28">
    <location>
        <begin position="1"/>
        <end position="94"/>
    </location>
</feature>
<feature type="region of interest" description="Disordered" evidence="2">
    <location>
        <begin position="1"/>
        <end position="21"/>
    </location>
</feature>
<feature type="compositionally biased region" description="Polar residues" evidence="2">
    <location>
        <begin position="11"/>
        <end position="20"/>
    </location>
</feature>
<reference key="1">
    <citation type="journal article" date="2004" name="J. Bacteriol.">
        <title>Comparative genomics of two Leptospira interrogans serovars reveals novel insights into physiology and pathogenesis.</title>
        <authorList>
            <person name="Nascimento A.L.T.O."/>
            <person name="Ko A.I."/>
            <person name="Martins E.A.L."/>
            <person name="Monteiro-Vitorello C.B."/>
            <person name="Ho P.L."/>
            <person name="Haake D.A."/>
            <person name="Verjovski-Almeida S."/>
            <person name="Hartskeerl R.A."/>
            <person name="Marques M.V."/>
            <person name="Oliveira M.C."/>
            <person name="Menck C.F.M."/>
            <person name="Leite L.C.C."/>
            <person name="Carrer H."/>
            <person name="Coutinho L.L."/>
            <person name="Degrave W.M."/>
            <person name="Dellagostin O.A."/>
            <person name="El-Dorry H."/>
            <person name="Ferro E.S."/>
            <person name="Ferro M.I.T."/>
            <person name="Furlan L.R."/>
            <person name="Gamberini M."/>
            <person name="Giglioti E.A."/>
            <person name="Goes-Neto A."/>
            <person name="Goldman G.H."/>
            <person name="Goldman M.H.S."/>
            <person name="Harakava R."/>
            <person name="Jeronimo S.M.B."/>
            <person name="Junqueira-de-Azevedo I.L.M."/>
            <person name="Kimura E.T."/>
            <person name="Kuramae E.E."/>
            <person name="Lemos E.G.M."/>
            <person name="Lemos M.V.F."/>
            <person name="Marino C.L."/>
            <person name="Nunes L.R."/>
            <person name="de Oliveira R.C."/>
            <person name="Pereira G.G."/>
            <person name="Reis M.S."/>
            <person name="Schriefer A."/>
            <person name="Siqueira W.J."/>
            <person name="Sommer P."/>
            <person name="Tsai S.M."/>
            <person name="Simpson A.J.G."/>
            <person name="Ferro J.A."/>
            <person name="Camargo L.E.A."/>
            <person name="Kitajima J.P."/>
            <person name="Setubal J.C."/>
            <person name="Van Sluys M.A."/>
        </authorList>
    </citation>
    <scope>NUCLEOTIDE SEQUENCE [LARGE SCALE GENOMIC DNA]</scope>
    <source>
        <strain>Fiocruz L1-130</strain>
    </source>
</reference>
<name>RL28_LEPIC</name>
<gene>
    <name evidence="1" type="primary">rpmB</name>
    <name type="ordered locus">LIC_11760</name>
</gene>
<protein>
    <recommendedName>
        <fullName evidence="1">Large ribosomal subunit protein bL28</fullName>
    </recommendedName>
    <alternativeName>
        <fullName evidence="3">50S ribosomal protein L28</fullName>
    </alternativeName>
</protein>